<gene>
    <name type="primary">lpd3</name>
    <name type="ordered locus">PA4829</name>
</gene>
<comment type="function">
    <text evidence="1">LPD-3 may substitute for lipoamide dehydrogenase of the 2-oxoglutarate dehydrogenase and pyruvate multienzyme complexes when the latter is inactive or missing.</text>
</comment>
<comment type="catalytic activity">
    <reaction>
        <text>N(6)-[(R)-dihydrolipoyl]-L-lysyl-[protein] + NAD(+) = N(6)-[(R)-lipoyl]-L-lysyl-[protein] + NADH + H(+)</text>
        <dbReference type="Rhea" id="RHEA:15045"/>
        <dbReference type="Rhea" id="RHEA-COMP:10474"/>
        <dbReference type="Rhea" id="RHEA-COMP:10475"/>
        <dbReference type="ChEBI" id="CHEBI:15378"/>
        <dbReference type="ChEBI" id="CHEBI:57540"/>
        <dbReference type="ChEBI" id="CHEBI:57945"/>
        <dbReference type="ChEBI" id="CHEBI:83099"/>
        <dbReference type="ChEBI" id="CHEBI:83100"/>
        <dbReference type="EC" id="1.8.1.4"/>
    </reaction>
</comment>
<comment type="cofactor">
    <cofactor evidence="1">
        <name>FAD</name>
        <dbReference type="ChEBI" id="CHEBI:57692"/>
    </cofactor>
    <text evidence="1">Binds 1 FAD per subunit.</text>
</comment>
<comment type="subunit">
    <text evidence="1">Homodimer.</text>
</comment>
<comment type="subcellular location">
    <subcellularLocation>
        <location evidence="1">Cytoplasm</location>
    </subcellularLocation>
</comment>
<comment type="miscellaneous">
    <text evidence="1">The active site is a redox-active disulfide bond.</text>
</comment>
<comment type="similarity">
    <text evidence="2">Belongs to the class-I pyridine nucleotide-disulfide oxidoreductase family.</text>
</comment>
<evidence type="ECO:0000250" key="1"/>
<evidence type="ECO:0000305" key="2"/>
<protein>
    <recommendedName>
        <fullName>Dihydrolipoyl dehydrogenase 3</fullName>
        <ecNumber>1.8.1.4</ecNumber>
    </recommendedName>
    <alternativeName>
        <fullName>Dihydrolipoamide dehydrogenase 3</fullName>
        <shortName>LPD-3</shortName>
    </alternativeName>
</protein>
<sequence>MMESYDVIVIGAGPGGYNAAIRAGQLGLKVACVEGRETLGGTCLNVGCMPSKALLHASELYAAASGGEFARLGIRVSPELDLAQMMKQKDESVAALTRGVEFLFRKHKVQWIKGWARLQGEGRVGVALADGGHAQLEARDIVIATGSEPAPLPGVPVDNQRILDSTGALELVEVPRHLVVIGAGVIGLELGSVWRRLGAQVTVLEYLERICPGLDGETARTLQRALTRQGMRFRLGTRVVAARSGEQGVELDLQPAAGGATESLQADYVLVAIGRRPYTEGLGLETVGLASDRRGMLENQGQRSAAPGVWVIGDVTSGPMLAHKAEEEAIVCIERIAGHAAEMNAEVIPSVIYTQPEVASVGLGEEQLQAARREYKVGRFPFSANSRAKINHESEGFIKILSDARSDQVLGVHMIGPGVSEMIGEACVAMEFSASAEDLALTCHPHPTRSEALRQAAMDVHGRAMQN</sequence>
<proteinExistence type="inferred from homology"/>
<keyword id="KW-0963">Cytoplasm</keyword>
<keyword id="KW-1015">Disulfide bond</keyword>
<keyword id="KW-0274">FAD</keyword>
<keyword id="KW-0285">Flavoprotein</keyword>
<keyword id="KW-0520">NAD</keyword>
<keyword id="KW-0560">Oxidoreductase</keyword>
<keyword id="KW-0676">Redox-active center</keyword>
<keyword id="KW-1185">Reference proteome</keyword>
<accession>Q9HUY1</accession>
<feature type="chain" id="PRO_0000287806" description="Dihydrolipoyl dehydrogenase 3">
    <location>
        <begin position="1"/>
        <end position="467"/>
    </location>
</feature>
<feature type="active site" description="Proton acceptor" evidence="1">
    <location>
        <position position="446"/>
    </location>
</feature>
<feature type="binding site" evidence="1">
    <location>
        <begin position="34"/>
        <end position="43"/>
    </location>
    <ligand>
        <name>FAD</name>
        <dbReference type="ChEBI" id="CHEBI:57692"/>
    </ligand>
</feature>
<feature type="binding site" evidence="1">
    <location>
        <position position="52"/>
    </location>
    <ligand>
        <name>FAD</name>
        <dbReference type="ChEBI" id="CHEBI:57692"/>
    </ligand>
</feature>
<feature type="binding site" evidence="1">
    <location>
        <position position="116"/>
    </location>
    <ligand>
        <name>FAD</name>
        <dbReference type="ChEBI" id="CHEBI:57692"/>
    </ligand>
</feature>
<feature type="binding site" evidence="1">
    <location>
        <begin position="182"/>
        <end position="186"/>
    </location>
    <ligand>
        <name>NAD(+)</name>
        <dbReference type="ChEBI" id="CHEBI:57540"/>
    </ligand>
</feature>
<feature type="binding site" evidence="1">
    <location>
        <position position="205"/>
    </location>
    <ligand>
        <name>NAD(+)</name>
        <dbReference type="ChEBI" id="CHEBI:57540"/>
    </ligand>
</feature>
<feature type="binding site" evidence="1">
    <location>
        <position position="239"/>
    </location>
    <ligand>
        <name>NAD(+)</name>
        <dbReference type="ChEBI" id="CHEBI:57540"/>
    </ligand>
</feature>
<feature type="binding site" evidence="1">
    <location>
        <begin position="272"/>
        <end position="275"/>
    </location>
    <ligand>
        <name>NAD(+)</name>
        <dbReference type="ChEBI" id="CHEBI:57540"/>
    </ligand>
</feature>
<feature type="binding site" evidence="1">
    <location>
        <position position="314"/>
    </location>
    <ligand>
        <name>FAD</name>
        <dbReference type="ChEBI" id="CHEBI:57692"/>
    </ligand>
</feature>
<feature type="binding site" evidence="1">
    <location>
        <position position="322"/>
    </location>
    <ligand>
        <name>FAD</name>
        <dbReference type="ChEBI" id="CHEBI:57692"/>
    </ligand>
</feature>
<feature type="disulfide bond" description="Redox-active" evidence="1">
    <location>
        <begin position="43"/>
        <end position="48"/>
    </location>
</feature>
<organism>
    <name type="scientific">Pseudomonas aeruginosa (strain ATCC 15692 / DSM 22644 / CIP 104116 / JCM 14847 / LMG 12228 / 1C / PRS 101 / PAO1)</name>
    <dbReference type="NCBI Taxonomy" id="208964"/>
    <lineage>
        <taxon>Bacteria</taxon>
        <taxon>Pseudomonadati</taxon>
        <taxon>Pseudomonadota</taxon>
        <taxon>Gammaproteobacteria</taxon>
        <taxon>Pseudomonadales</taxon>
        <taxon>Pseudomonadaceae</taxon>
        <taxon>Pseudomonas</taxon>
    </lineage>
</organism>
<reference key="1">
    <citation type="journal article" date="2000" name="Nature">
        <title>Complete genome sequence of Pseudomonas aeruginosa PAO1, an opportunistic pathogen.</title>
        <authorList>
            <person name="Stover C.K."/>
            <person name="Pham X.-Q.T."/>
            <person name="Erwin A.L."/>
            <person name="Mizoguchi S.D."/>
            <person name="Warrener P."/>
            <person name="Hickey M.J."/>
            <person name="Brinkman F.S.L."/>
            <person name="Hufnagle W.O."/>
            <person name="Kowalik D.J."/>
            <person name="Lagrou M."/>
            <person name="Garber R.L."/>
            <person name="Goltry L."/>
            <person name="Tolentino E."/>
            <person name="Westbrock-Wadman S."/>
            <person name="Yuan Y."/>
            <person name="Brody L.L."/>
            <person name="Coulter S.N."/>
            <person name="Folger K.R."/>
            <person name="Kas A."/>
            <person name="Larbig K."/>
            <person name="Lim R.M."/>
            <person name="Smith K.A."/>
            <person name="Spencer D.H."/>
            <person name="Wong G.K.-S."/>
            <person name="Wu Z."/>
            <person name="Paulsen I.T."/>
            <person name="Reizer J."/>
            <person name="Saier M.H. Jr."/>
            <person name="Hancock R.E.W."/>
            <person name="Lory S."/>
            <person name="Olson M.V."/>
        </authorList>
    </citation>
    <scope>NUCLEOTIDE SEQUENCE [LARGE SCALE GENOMIC DNA]</scope>
    <source>
        <strain>ATCC 15692 / DSM 22644 / CIP 104116 / JCM 14847 / LMG 12228 / 1C / PRS 101 / PAO1</strain>
    </source>
</reference>
<dbReference type="EC" id="1.8.1.4"/>
<dbReference type="EMBL" id="AE004091">
    <property type="protein sequence ID" value="AAG08214.1"/>
    <property type="molecule type" value="Genomic_DNA"/>
</dbReference>
<dbReference type="PIR" id="A83042">
    <property type="entry name" value="A83042"/>
</dbReference>
<dbReference type="RefSeq" id="NP_253516.1">
    <property type="nucleotide sequence ID" value="NC_002516.2"/>
</dbReference>
<dbReference type="SMR" id="Q9HUY1"/>
<dbReference type="FunCoup" id="Q9HUY1">
    <property type="interactions" value="836"/>
</dbReference>
<dbReference type="STRING" id="208964.PA4829"/>
<dbReference type="PaxDb" id="208964-PA4829"/>
<dbReference type="GeneID" id="882254"/>
<dbReference type="KEGG" id="pae:PA4829"/>
<dbReference type="PATRIC" id="fig|208964.12.peg.5060"/>
<dbReference type="PseudoCAP" id="PA4829"/>
<dbReference type="HOGENOM" id="CLU_016755_0_1_6"/>
<dbReference type="InParanoid" id="Q9HUY1"/>
<dbReference type="OrthoDB" id="9800167at2"/>
<dbReference type="PhylomeDB" id="Q9HUY1"/>
<dbReference type="BioCyc" id="PAER208964:G1FZ6-4943-MONOMER"/>
<dbReference type="Proteomes" id="UP000002438">
    <property type="component" value="Chromosome"/>
</dbReference>
<dbReference type="GO" id="GO:0005737">
    <property type="term" value="C:cytoplasm"/>
    <property type="evidence" value="ECO:0007669"/>
    <property type="project" value="UniProtKB-SubCell"/>
</dbReference>
<dbReference type="GO" id="GO:0004148">
    <property type="term" value="F:dihydrolipoyl dehydrogenase (NADH) activity"/>
    <property type="evidence" value="ECO:0000318"/>
    <property type="project" value="GO_Central"/>
</dbReference>
<dbReference type="GO" id="GO:0050660">
    <property type="term" value="F:flavin adenine dinucleotide binding"/>
    <property type="evidence" value="ECO:0000318"/>
    <property type="project" value="GO_Central"/>
</dbReference>
<dbReference type="GO" id="GO:0006103">
    <property type="term" value="P:2-oxoglutarate metabolic process"/>
    <property type="evidence" value="ECO:0000318"/>
    <property type="project" value="GO_Central"/>
</dbReference>
<dbReference type="GO" id="GO:0006090">
    <property type="term" value="P:pyruvate metabolic process"/>
    <property type="evidence" value="ECO:0000318"/>
    <property type="project" value="GO_Central"/>
</dbReference>
<dbReference type="FunFam" id="3.30.390.30:FF:000001">
    <property type="entry name" value="Dihydrolipoyl dehydrogenase"/>
    <property type="match status" value="1"/>
</dbReference>
<dbReference type="Gene3D" id="3.30.390.30">
    <property type="match status" value="1"/>
</dbReference>
<dbReference type="Gene3D" id="3.50.50.60">
    <property type="entry name" value="FAD/NAD(P)-binding domain"/>
    <property type="match status" value="2"/>
</dbReference>
<dbReference type="InterPro" id="IPR050151">
    <property type="entry name" value="Class-I_Pyr_Nuc-Dis_Oxidored"/>
</dbReference>
<dbReference type="InterPro" id="IPR036188">
    <property type="entry name" value="FAD/NAD-bd_sf"/>
</dbReference>
<dbReference type="InterPro" id="IPR023753">
    <property type="entry name" value="FAD/NAD-binding_dom"/>
</dbReference>
<dbReference type="InterPro" id="IPR016156">
    <property type="entry name" value="FAD/NAD-linked_Rdtase_dimer_sf"/>
</dbReference>
<dbReference type="InterPro" id="IPR006258">
    <property type="entry name" value="Lipoamide_DH"/>
</dbReference>
<dbReference type="InterPro" id="IPR001100">
    <property type="entry name" value="Pyr_nuc-diS_OxRdtase"/>
</dbReference>
<dbReference type="InterPro" id="IPR004099">
    <property type="entry name" value="Pyr_nucl-diS_OxRdtase_dimer"/>
</dbReference>
<dbReference type="InterPro" id="IPR012999">
    <property type="entry name" value="Pyr_OxRdtase_I_AS"/>
</dbReference>
<dbReference type="NCBIfam" id="TIGR01350">
    <property type="entry name" value="lipoamide_DH"/>
    <property type="match status" value="1"/>
</dbReference>
<dbReference type="PANTHER" id="PTHR22912:SF151">
    <property type="entry name" value="DIHYDROLIPOYL DEHYDROGENASE, MITOCHONDRIAL"/>
    <property type="match status" value="1"/>
</dbReference>
<dbReference type="PANTHER" id="PTHR22912">
    <property type="entry name" value="DISULFIDE OXIDOREDUCTASE"/>
    <property type="match status" value="1"/>
</dbReference>
<dbReference type="Pfam" id="PF07992">
    <property type="entry name" value="Pyr_redox_2"/>
    <property type="match status" value="1"/>
</dbReference>
<dbReference type="Pfam" id="PF02852">
    <property type="entry name" value="Pyr_redox_dim"/>
    <property type="match status" value="1"/>
</dbReference>
<dbReference type="PIRSF" id="PIRSF000350">
    <property type="entry name" value="Mercury_reductase_MerA"/>
    <property type="match status" value="1"/>
</dbReference>
<dbReference type="PRINTS" id="PR00368">
    <property type="entry name" value="FADPNR"/>
</dbReference>
<dbReference type="PRINTS" id="PR00411">
    <property type="entry name" value="PNDRDTASEI"/>
</dbReference>
<dbReference type="SUPFAM" id="SSF51905">
    <property type="entry name" value="FAD/NAD(P)-binding domain"/>
    <property type="match status" value="1"/>
</dbReference>
<dbReference type="SUPFAM" id="SSF55424">
    <property type="entry name" value="FAD/NAD-linked reductases, dimerisation (C-terminal) domain"/>
    <property type="match status" value="1"/>
</dbReference>
<dbReference type="PROSITE" id="PS00076">
    <property type="entry name" value="PYRIDINE_REDOX_1"/>
    <property type="match status" value="1"/>
</dbReference>
<name>DLDH3_PSEAE</name>